<proteinExistence type="evidence at transcript level"/>
<gene>
    <name type="primary">gh</name>
</gene>
<protein>
    <recommendedName>
        <fullName>Somatotropin</fullName>
    </recommendedName>
    <alternativeName>
        <fullName>Growth hormone</fullName>
    </alternativeName>
</protein>
<comment type="function">
    <text>Growth hormone plays an important role in growth control and is involved in the regulation of several anabolic processes. Implicated as an osmoregulatory substance important for seawater adaptation.</text>
</comment>
<comment type="subcellular location">
    <subcellularLocation>
        <location>Secreted</location>
    </subcellularLocation>
</comment>
<comment type="similarity">
    <text evidence="2">Belongs to the somatotropin/prolactin family.</text>
</comment>
<reference key="1">
    <citation type="journal article" date="1996" name="J. Mol. Endocrinol.">
        <title>Cloning of a gar (Lepisosteus osseus) GH cDNA: trends in actinopterygian GH structure.</title>
        <authorList>
            <person name="Rubin D.A."/>
            <person name="Youson J.H."/>
            <person name="Marra L.E."/>
            <person name="Dores R.M."/>
        </authorList>
    </citation>
    <scope>NUCLEOTIDE SEQUENCE [MRNA]</scope>
    <source>
        <tissue>Pituitary</tissue>
    </source>
</reference>
<organism>
    <name type="scientific">Lepisosteus osseus</name>
    <name type="common">Long-nosed gar</name>
    <name type="synonym">Esox osseus</name>
    <dbReference type="NCBI Taxonomy" id="34771"/>
    <lineage>
        <taxon>Eukaryota</taxon>
        <taxon>Metazoa</taxon>
        <taxon>Chordata</taxon>
        <taxon>Craniata</taxon>
        <taxon>Vertebrata</taxon>
        <taxon>Euteleostomi</taxon>
        <taxon>Actinopterygii</taxon>
        <taxon>Neopterygii</taxon>
        <taxon>Holostei</taxon>
        <taxon>Semionotiformes</taxon>
        <taxon>Lepisosteidae</taxon>
        <taxon>Lepisosteus</taxon>
    </lineage>
</organism>
<evidence type="ECO:0000250" key="1"/>
<evidence type="ECO:0000305" key="2"/>
<dbReference type="EMBL" id="S82528">
    <property type="protein sequence ID" value="AAB37388.1"/>
    <property type="molecule type" value="mRNA"/>
</dbReference>
<dbReference type="SMR" id="P79885"/>
<dbReference type="GO" id="GO:0005615">
    <property type="term" value="C:extracellular space"/>
    <property type="evidence" value="ECO:0007669"/>
    <property type="project" value="InterPro"/>
</dbReference>
<dbReference type="GO" id="GO:0070186">
    <property type="term" value="F:growth hormone activity"/>
    <property type="evidence" value="ECO:0007669"/>
    <property type="project" value="TreeGrafter"/>
</dbReference>
<dbReference type="GO" id="GO:0005131">
    <property type="term" value="F:growth hormone receptor binding"/>
    <property type="evidence" value="ECO:0007669"/>
    <property type="project" value="InterPro"/>
</dbReference>
<dbReference type="GO" id="GO:0046872">
    <property type="term" value="F:metal ion binding"/>
    <property type="evidence" value="ECO:0007669"/>
    <property type="project" value="UniProtKB-KW"/>
</dbReference>
<dbReference type="GO" id="GO:0048513">
    <property type="term" value="P:animal organ development"/>
    <property type="evidence" value="ECO:0007669"/>
    <property type="project" value="TreeGrafter"/>
</dbReference>
<dbReference type="GO" id="GO:0060396">
    <property type="term" value="P:growth hormone receptor signaling pathway"/>
    <property type="evidence" value="ECO:0007669"/>
    <property type="project" value="TreeGrafter"/>
</dbReference>
<dbReference type="GO" id="GO:0045927">
    <property type="term" value="P:positive regulation of growth"/>
    <property type="evidence" value="ECO:0007669"/>
    <property type="project" value="TreeGrafter"/>
</dbReference>
<dbReference type="GO" id="GO:0046427">
    <property type="term" value="P:positive regulation of receptor signaling pathway via JAK-STAT"/>
    <property type="evidence" value="ECO:0007669"/>
    <property type="project" value="TreeGrafter"/>
</dbReference>
<dbReference type="GO" id="GO:0031667">
    <property type="term" value="P:response to nutrient levels"/>
    <property type="evidence" value="ECO:0007669"/>
    <property type="project" value="TreeGrafter"/>
</dbReference>
<dbReference type="CDD" id="cd10285">
    <property type="entry name" value="somatotropin_like"/>
    <property type="match status" value="1"/>
</dbReference>
<dbReference type="Gene3D" id="1.20.1250.10">
    <property type="match status" value="1"/>
</dbReference>
<dbReference type="InterPro" id="IPR009079">
    <property type="entry name" value="4_helix_cytokine-like_core"/>
</dbReference>
<dbReference type="InterPro" id="IPR034975">
    <property type="entry name" value="Somatotropin"/>
</dbReference>
<dbReference type="InterPro" id="IPR001400">
    <property type="entry name" value="Somatotropin/Prolactin"/>
</dbReference>
<dbReference type="InterPro" id="IPR018116">
    <property type="entry name" value="Somatotropin_CS"/>
</dbReference>
<dbReference type="PANTHER" id="PTHR11417:SF2">
    <property type="entry name" value="SOMATOTROPIN"/>
    <property type="match status" value="1"/>
</dbReference>
<dbReference type="PANTHER" id="PTHR11417">
    <property type="entry name" value="SOMATOTROPIN,PROLACTIN"/>
    <property type="match status" value="1"/>
</dbReference>
<dbReference type="Pfam" id="PF00103">
    <property type="entry name" value="Hormone_1"/>
    <property type="match status" value="1"/>
</dbReference>
<dbReference type="PRINTS" id="PR00836">
    <property type="entry name" value="SOMATOTROPIN"/>
</dbReference>
<dbReference type="SUPFAM" id="SSF47266">
    <property type="entry name" value="4-helical cytokines"/>
    <property type="match status" value="1"/>
</dbReference>
<dbReference type="PROSITE" id="PS00266">
    <property type="entry name" value="SOMATOTROPIN_1"/>
    <property type="match status" value="1"/>
</dbReference>
<dbReference type="PROSITE" id="PS00338">
    <property type="entry name" value="SOMATOTROPIN_2"/>
    <property type="match status" value="1"/>
</dbReference>
<accession>P79885</accession>
<sequence>MASGFLLCPVLLAVFFMSPVEVGAFPLYSLFTNAVIRAQHLHQLAADIYKDFERTYVPEEQRQSSKSSPSAICYSESIPAPTGKDEAQQRSDVELLRFSLALIQSWISPLQTLSRVFSNSLVFGTSDRIFEKLQDLERGIVTLTREIDEGSPRIAAFLTLTYEKFDTNLRNDDALMKNYGLLACFKKDMHKVETYLKVMKCRRFVESNCTL</sequence>
<name>SOMA_LEPOS</name>
<feature type="signal peptide" evidence="1">
    <location>
        <begin position="1"/>
        <end position="23"/>
    </location>
</feature>
<feature type="chain" id="PRO_0000033030" description="Somatotropin">
    <location>
        <begin position="24"/>
        <end position="211"/>
    </location>
</feature>
<feature type="binding site" evidence="1">
    <location>
        <position position="40"/>
    </location>
    <ligand>
        <name>Zn(2+)</name>
        <dbReference type="ChEBI" id="CHEBI:29105"/>
    </ligand>
</feature>
<feature type="binding site" evidence="1">
    <location>
        <position position="193"/>
    </location>
    <ligand>
        <name>Zn(2+)</name>
        <dbReference type="ChEBI" id="CHEBI:29105"/>
    </ligand>
</feature>
<feature type="disulfide bond" evidence="1">
    <location>
        <begin position="73"/>
        <end position="184"/>
    </location>
</feature>
<feature type="disulfide bond" evidence="1">
    <location>
        <begin position="201"/>
        <end position="209"/>
    </location>
</feature>
<keyword id="KW-1015">Disulfide bond</keyword>
<keyword id="KW-0372">Hormone</keyword>
<keyword id="KW-0479">Metal-binding</keyword>
<keyword id="KW-0964">Secreted</keyword>
<keyword id="KW-0732">Signal</keyword>
<keyword id="KW-0862">Zinc</keyword>